<feature type="signal peptide" evidence="3">
    <location>
        <begin position="1"/>
        <end position="27"/>
    </location>
</feature>
<feature type="chain" id="PRO_0000008392" description="Ephrin-B2">
    <location>
        <begin position="28"/>
        <end position="333"/>
    </location>
</feature>
<feature type="topological domain" description="Extracellular" evidence="3">
    <location>
        <begin position="28"/>
        <end position="229"/>
    </location>
</feature>
<feature type="transmembrane region" description="Helical" evidence="3">
    <location>
        <begin position="230"/>
        <end position="250"/>
    </location>
</feature>
<feature type="topological domain" description="Cytoplasmic" evidence="3">
    <location>
        <begin position="251"/>
        <end position="333"/>
    </location>
</feature>
<feature type="domain" description="Ephrin RBD" evidence="4">
    <location>
        <begin position="28"/>
        <end position="164"/>
    </location>
</feature>
<feature type="region of interest" description="Disordered" evidence="5">
    <location>
        <begin position="165"/>
        <end position="213"/>
    </location>
</feature>
<feature type="short sequence motif" description="PDZ-binding" evidence="3">
    <location>
        <begin position="331"/>
        <end position="333"/>
    </location>
</feature>
<feature type="compositionally biased region" description="Basic and acidic residues" evidence="5">
    <location>
        <begin position="175"/>
        <end position="185"/>
    </location>
</feature>
<feature type="compositionally biased region" description="Polar residues" evidence="5">
    <location>
        <begin position="190"/>
        <end position="213"/>
    </location>
</feature>
<feature type="modified residue" description="Phosphoserine" evidence="2">
    <location>
        <position position="260"/>
    </location>
</feature>
<feature type="modified residue" description="Phosphothreonine" evidence="2">
    <location>
        <position position="274"/>
    </location>
</feature>
<feature type="modified residue" description="Omega-N-methylarginine" evidence="2">
    <location>
        <position position="277"/>
    </location>
</feature>
<feature type="glycosylation site" description="N-linked (GlcNAc...) asparagine" evidence="3 12 13">
    <location>
        <position position="36"/>
    </location>
</feature>
<feature type="glycosylation site" description="N-linked (GlcNAc...) asparagine" evidence="3">
    <location>
        <position position="139"/>
    </location>
</feature>
<feature type="disulfide bond" evidence="10 12 13 14 16 18 19">
    <location>
        <begin position="62"/>
        <end position="101"/>
    </location>
</feature>
<feature type="disulfide bond" evidence="10 12 13 14 16 18 19">
    <location>
        <begin position="89"/>
        <end position="153"/>
    </location>
</feature>
<feature type="mutagenesis site" description="Complete loss of Nipah protein G binding." evidence="9">
    <original>LW</original>
    <variation>YM</variation>
    <location>
        <begin position="121"/>
        <end position="122"/>
    </location>
</feature>
<feature type="strand" evidence="21">
    <location>
        <begin position="28"/>
        <end position="34"/>
    </location>
</feature>
<feature type="turn" evidence="21">
    <location>
        <begin position="44"/>
        <end position="46"/>
    </location>
</feature>
<feature type="strand" evidence="21">
    <location>
        <begin position="47"/>
        <end position="50"/>
    </location>
</feature>
<feature type="strand" evidence="21">
    <location>
        <begin position="57"/>
        <end position="62"/>
    </location>
</feature>
<feature type="strand" evidence="20">
    <location>
        <begin position="65"/>
        <end position="68"/>
    </location>
</feature>
<feature type="strand" evidence="21">
    <location>
        <begin position="75"/>
        <end position="81"/>
    </location>
</feature>
<feature type="helix" evidence="21">
    <location>
        <begin position="83"/>
        <end position="87"/>
    </location>
</feature>
<feature type="strand" evidence="21">
    <location>
        <begin position="98"/>
        <end position="101"/>
    </location>
</feature>
<feature type="turn" evidence="20">
    <location>
        <begin position="103"/>
        <end position="105"/>
    </location>
</feature>
<feature type="strand" evidence="21">
    <location>
        <begin position="108"/>
        <end position="113"/>
    </location>
</feature>
<feature type="strand" evidence="21">
    <location>
        <begin position="119"/>
        <end position="122"/>
    </location>
</feature>
<feature type="strand" evidence="21">
    <location>
        <begin position="130"/>
        <end position="135"/>
    </location>
</feature>
<feature type="helix" evidence="21">
    <location>
        <begin position="142"/>
        <end position="144"/>
    </location>
</feature>
<feature type="strand" evidence="20">
    <location>
        <begin position="145"/>
        <end position="149"/>
    </location>
</feature>
<feature type="helix" evidence="21">
    <location>
        <begin position="151"/>
        <end position="155"/>
    </location>
</feature>
<feature type="strand" evidence="21">
    <location>
        <begin position="159"/>
        <end position="164"/>
    </location>
</feature>
<name>EFNB2_HUMAN</name>
<comment type="function">
    <text evidence="6">Cell surface transmembrane ligand for Eph receptors, a family of receptor tyrosine kinases which are crucial for migration, repulsion and adhesion during neuronal, vascular and epithelial development. Binds promiscuously Eph receptors residing on adjacent cells, leading to contact-dependent bidirectional signaling into neighboring cells. The signaling pathway downstream of the receptor is referred to as forward signaling while the signaling pathway downstream of the ephrin ligand is referred to as reverse signaling. Binds to receptor tyrosine kinase including EPHA4, EPHA3 and EPHB4. Together with EPHB4 plays a central role in heart morphogenesis and angiogenesis through regulation of cell adhesion and cell migration. EPHB4-mediated forward signaling controls cellular repulsion and segregation from EFNB2-expressing cells. May play a role in constraining the orientation of longitudinally projecting axons.</text>
</comment>
<comment type="function">
    <text evidence="7 8 9 11">(Microbial infection) Acts as a receptor for Hendra virus and Nipah virus.</text>
</comment>
<comment type="subunit">
    <text evidence="1 10 13 14">Interacts with PDZRN3 (By similarity). Binds to the receptor tyrosine kinases EPHA4, EPHB4 and EPHA3.</text>
</comment>
<comment type="subunit">
    <text evidence="7 8 9 11">(Microbial infection) Interacts with Hendra virus and Nipah virus G protein (PubMed:15998730, PubMed:16007075, PubMed:16477309, PubMed:17376907).</text>
</comment>
<comment type="interaction">
    <interactant intactId="EBI-7532268">
        <id>P52799</id>
    </interactant>
    <interactant intactId="EBI-12109402">
        <id>Q86W74-2</id>
        <label>ANKRD46</label>
    </interactant>
    <organismsDiffer>false</organismsDiffer>
    <experiments>3</experiments>
</comment>
<comment type="interaction">
    <interactant intactId="EBI-7532268">
        <id>P52799</id>
    </interactant>
    <interactant intactId="EBI-5773557">
        <id>P54764</id>
        <label>EPHA4</label>
    </interactant>
    <organismsDiffer>false</organismsDiffer>
    <experiments>4</experiments>
</comment>
<comment type="interaction">
    <interactant intactId="EBI-7532268">
        <id>P52799</id>
    </interactant>
    <interactant intactId="EBI-702121">
        <id>P54760</id>
        <label>EPHB4</label>
    </interactant>
    <organismsDiffer>false</organismsDiffer>
    <experiments>6</experiments>
</comment>
<comment type="interaction">
    <interactant intactId="EBI-7532268">
        <id>P52799</id>
    </interactant>
    <interactant intactId="EBI-713635">
        <id>O43639</id>
        <label>NCK2</label>
    </interactant>
    <organismsDiffer>false</organismsDiffer>
    <experiments>7</experiments>
</comment>
<comment type="interaction">
    <interactant intactId="EBI-7532268">
        <id>P52799</id>
    </interactant>
    <interactant intactId="EBI-15702753">
        <id>O89343</id>
        <label>G</label>
    </interactant>
    <organismsDiffer>true</organismsDiffer>
    <experiments>2</experiments>
</comment>
<comment type="interaction">
    <interactant intactId="EBI-7532268">
        <id>P52799</id>
    </interactant>
    <interactant intactId="EBI-15702710">
        <id>Q9IH62</id>
        <label>G</label>
    </interactant>
    <organismsDiffer>true</organismsDiffer>
    <experiments>5</experiments>
</comment>
<comment type="subcellular location">
    <subcellularLocation>
        <location evidence="15">Cell membrane</location>
        <topology evidence="3">Single-pass type I membrane protein</topology>
    </subcellularLocation>
    <subcellularLocation>
        <location evidence="2">Cell junction</location>
        <location evidence="2">Adherens junction</location>
    </subcellularLocation>
</comment>
<comment type="tissue specificity">
    <text>Lung and kidney.</text>
</comment>
<comment type="PTM">
    <text evidence="1">Inducible phosphorylation of tyrosine residues in the cytoplasmic domain.</text>
</comment>
<comment type="similarity">
    <text evidence="4">Belongs to the ephrin family.</text>
</comment>
<evidence type="ECO:0000250" key="1"/>
<evidence type="ECO:0000250" key="2">
    <source>
        <dbReference type="UniProtKB" id="P52800"/>
    </source>
</evidence>
<evidence type="ECO:0000255" key="3"/>
<evidence type="ECO:0000255" key="4">
    <source>
        <dbReference type="PROSITE-ProRule" id="PRU00884"/>
    </source>
</evidence>
<evidence type="ECO:0000256" key="5">
    <source>
        <dbReference type="SAM" id="MobiDB-lite"/>
    </source>
</evidence>
<evidence type="ECO:0000269" key="6">
    <source>
    </source>
</evidence>
<evidence type="ECO:0000269" key="7">
    <source>
    </source>
</evidence>
<evidence type="ECO:0000269" key="8">
    <source>
    </source>
</evidence>
<evidence type="ECO:0000269" key="9">
    <source>
    </source>
</evidence>
<evidence type="ECO:0000269" key="10">
    <source>
    </source>
</evidence>
<evidence type="ECO:0000269" key="11">
    <source>
    </source>
</evidence>
<evidence type="ECO:0000269" key="12">
    <source>
    </source>
</evidence>
<evidence type="ECO:0000269" key="13">
    <source>
    </source>
</evidence>
<evidence type="ECO:0000269" key="14">
    <source>
    </source>
</evidence>
<evidence type="ECO:0000269" key="15">
    <source>
    </source>
</evidence>
<evidence type="ECO:0000269" key="16">
    <source ref="14"/>
</evidence>
<evidence type="ECO:0007744" key="17">
    <source>
        <dbReference type="PDB" id="2I85"/>
    </source>
</evidence>
<evidence type="ECO:0007744" key="18">
    <source>
        <dbReference type="PDB" id="2VSK"/>
    </source>
</evidence>
<evidence type="ECO:0007744" key="19">
    <source>
        <dbReference type="PDB" id="2VSM"/>
    </source>
</evidence>
<evidence type="ECO:0007829" key="20">
    <source>
        <dbReference type="PDB" id="2I85"/>
    </source>
</evidence>
<evidence type="ECO:0007829" key="21">
    <source>
        <dbReference type="PDB" id="4UF7"/>
    </source>
</evidence>
<accession>P52799</accession>
<accession>Q5JV56</accession>
<protein>
    <recommendedName>
        <fullName>Ephrin-B2</fullName>
    </recommendedName>
    <alternativeName>
        <fullName>EPH-related receptor tyrosine kinase ligand 5</fullName>
        <shortName>LERK-5</shortName>
    </alternativeName>
    <alternativeName>
        <fullName>HTK ligand</fullName>
        <shortName>HTK-L</shortName>
    </alternativeName>
</protein>
<reference key="1">
    <citation type="journal article" date="1995" name="Mol. Immunol.">
        <title>Isolation of LERK-5: a ligand of the eph-related receptor tyrosine kinases.</title>
        <authorList>
            <person name="Cerretti D.P."/>
            <person name="Vanden Bos T."/>
            <person name="Nelson N."/>
            <person name="Kozlosky C.J."/>
            <person name="Reddy P."/>
            <person name="Maraskovsky E."/>
            <person name="Park L.S."/>
            <person name="Lyman S.D."/>
            <person name="Copeland N.G."/>
            <person name="Gilbert D.J."/>
            <person name="Jenkins N.A."/>
            <person name="Fletcher R.A."/>
        </authorList>
    </citation>
    <scope>NUCLEOTIDE SEQUENCE [MRNA]</scope>
    <source>
        <tissue>Brain</tissue>
    </source>
</reference>
<reference key="2">
    <citation type="journal article" date="1995" name="Proc. Natl. Acad. Sci. U.S.A.">
        <title>Molecular cloning of a ligand for the EPH-related receptor protein-tyrosine kinase Htk.</title>
        <authorList>
            <person name="Bennett B.D."/>
            <person name="Zeigler F.C."/>
            <person name="Gu Q."/>
            <person name="Fendly B."/>
            <person name="Goddard A.D."/>
            <person name="Gillett N."/>
            <person name="Matthews W."/>
        </authorList>
    </citation>
    <scope>NUCLEOTIDE SEQUENCE [MRNA]</scope>
    <source>
        <tissue>Brain</tissue>
    </source>
</reference>
<reference key="3">
    <citation type="journal article" date="1998" name="Clin. Cancer Res.">
        <title>Overexpression of Lerk-5/Eplg5 messenger RNA: a novel marker for increased tumorigenicity and metastatic potential in human malignant melanomas.</title>
        <authorList>
            <person name="Vogt T."/>
            <person name="Stolz W."/>
            <person name="Welsh J."/>
            <person name="Jung B."/>
            <person name="Kerbel R.S."/>
            <person name="Kobayashi H."/>
            <person name="Landthaler M."/>
            <person name="McClelland M."/>
        </authorList>
    </citation>
    <scope>NUCLEOTIDE SEQUENCE [MRNA]</scope>
</reference>
<reference key="4">
    <citation type="journal article" date="2004" name="Nature">
        <title>The DNA sequence and analysis of human chromosome 13.</title>
        <authorList>
            <person name="Dunham A."/>
            <person name="Matthews L.H."/>
            <person name="Burton J."/>
            <person name="Ashurst J.L."/>
            <person name="Howe K.L."/>
            <person name="Ashcroft K.J."/>
            <person name="Beare D.M."/>
            <person name="Burford D.C."/>
            <person name="Hunt S.E."/>
            <person name="Griffiths-Jones S."/>
            <person name="Jones M.C."/>
            <person name="Keenan S.J."/>
            <person name="Oliver K."/>
            <person name="Scott C.E."/>
            <person name="Ainscough R."/>
            <person name="Almeida J.P."/>
            <person name="Ambrose K.D."/>
            <person name="Andrews D.T."/>
            <person name="Ashwell R.I.S."/>
            <person name="Babbage A.K."/>
            <person name="Bagguley C.L."/>
            <person name="Bailey J."/>
            <person name="Bannerjee R."/>
            <person name="Barlow K.F."/>
            <person name="Bates K."/>
            <person name="Beasley H."/>
            <person name="Bird C.P."/>
            <person name="Bray-Allen S."/>
            <person name="Brown A.J."/>
            <person name="Brown J.Y."/>
            <person name="Burrill W."/>
            <person name="Carder C."/>
            <person name="Carter N.P."/>
            <person name="Chapman J.C."/>
            <person name="Clamp M.E."/>
            <person name="Clark S.Y."/>
            <person name="Clarke G."/>
            <person name="Clee C.M."/>
            <person name="Clegg S.C."/>
            <person name="Cobley V."/>
            <person name="Collins J.E."/>
            <person name="Corby N."/>
            <person name="Coville G.J."/>
            <person name="Deloukas P."/>
            <person name="Dhami P."/>
            <person name="Dunham I."/>
            <person name="Dunn M."/>
            <person name="Earthrowl M.E."/>
            <person name="Ellington A.G."/>
            <person name="Faulkner L."/>
            <person name="Frankish A.G."/>
            <person name="Frankland J."/>
            <person name="French L."/>
            <person name="Garner P."/>
            <person name="Garnett J."/>
            <person name="Gilbert J.G.R."/>
            <person name="Gilson C.J."/>
            <person name="Ghori J."/>
            <person name="Grafham D.V."/>
            <person name="Gribble S.M."/>
            <person name="Griffiths C."/>
            <person name="Hall R.E."/>
            <person name="Hammond S."/>
            <person name="Harley J.L."/>
            <person name="Hart E.A."/>
            <person name="Heath P.D."/>
            <person name="Howden P.J."/>
            <person name="Huckle E.J."/>
            <person name="Hunt P.J."/>
            <person name="Hunt A.R."/>
            <person name="Johnson C."/>
            <person name="Johnson D."/>
            <person name="Kay M."/>
            <person name="Kimberley A.M."/>
            <person name="King A."/>
            <person name="Laird G.K."/>
            <person name="Langford C.J."/>
            <person name="Lawlor S."/>
            <person name="Leongamornlert D.A."/>
            <person name="Lloyd D.M."/>
            <person name="Lloyd C."/>
            <person name="Loveland J.E."/>
            <person name="Lovell J."/>
            <person name="Martin S."/>
            <person name="Mashreghi-Mohammadi M."/>
            <person name="McLaren S.J."/>
            <person name="McMurray A."/>
            <person name="Milne S."/>
            <person name="Moore M.J.F."/>
            <person name="Nickerson T."/>
            <person name="Palmer S.A."/>
            <person name="Pearce A.V."/>
            <person name="Peck A.I."/>
            <person name="Pelan S."/>
            <person name="Phillimore B."/>
            <person name="Porter K.M."/>
            <person name="Rice C.M."/>
            <person name="Searle S."/>
            <person name="Sehra H.K."/>
            <person name="Shownkeen R."/>
            <person name="Skuce C.D."/>
            <person name="Smith M."/>
            <person name="Steward C.A."/>
            <person name="Sycamore N."/>
            <person name="Tester J."/>
            <person name="Thomas D.W."/>
            <person name="Tracey A."/>
            <person name="Tromans A."/>
            <person name="Tubby B."/>
            <person name="Wall M."/>
            <person name="Wallis J.M."/>
            <person name="West A.P."/>
            <person name="Whitehead S.L."/>
            <person name="Willey D.L."/>
            <person name="Wilming L."/>
            <person name="Wray P.W."/>
            <person name="Wright M.W."/>
            <person name="Young L."/>
            <person name="Coulson A."/>
            <person name="Durbin R.M."/>
            <person name="Hubbard T."/>
            <person name="Sulston J.E."/>
            <person name="Beck S."/>
            <person name="Bentley D.R."/>
            <person name="Rogers J."/>
            <person name="Ross M.T."/>
        </authorList>
    </citation>
    <scope>NUCLEOTIDE SEQUENCE [LARGE SCALE GENOMIC DNA]</scope>
</reference>
<reference key="5">
    <citation type="journal article" date="2004" name="Genome Res.">
        <title>The status, quality, and expansion of the NIH full-length cDNA project: the Mammalian Gene Collection (MGC).</title>
        <authorList>
            <consortium name="The MGC Project Team"/>
        </authorList>
    </citation>
    <scope>NUCLEOTIDE SEQUENCE [LARGE SCALE MRNA]</scope>
    <source>
        <tissue>Lung</tissue>
    </source>
</reference>
<reference key="6">
    <citation type="journal article" date="2003" name="J. Cell Sci.">
        <title>Forward EphB4 signaling in endothelial cells controls cellular repulsion and segregation from ephrinB2 positive cells.</title>
        <authorList>
            <person name="Fueller T."/>
            <person name="Korff T."/>
            <person name="Kilian A."/>
            <person name="Dandekar G."/>
            <person name="Augustin H.G."/>
        </authorList>
    </citation>
    <scope>FUNCTION IN ANGIOGENESIS</scope>
</reference>
<reference key="7">
    <citation type="journal article" date="2005" name="Nature">
        <title>EphrinB2 is the entry receptor for Nipah virus, an emergent deadly paramyxovirus.</title>
        <authorList>
            <person name="Negrete O.A."/>
            <person name="Levroney E.L."/>
            <person name="Aguilar H.C."/>
            <person name="Bertolotti-Ciarlet A."/>
            <person name="Nazarian R."/>
            <person name="Tajyar S."/>
            <person name="Lee B."/>
        </authorList>
    </citation>
    <scope>FUNCTION (MICROBIAL INFECTION)</scope>
    <scope>INTERACTION WITH NIPAH VIRUS GLYCOPROTEIN</scope>
</reference>
<reference key="8">
    <citation type="journal article" date="2005" name="Proc. Natl. Acad. Sci. U.S.A.">
        <title>Ephrin-B2 ligand is a functional receptor for Hendra virus and Nipah virus.</title>
        <authorList>
            <person name="Bonaparte M.I."/>
            <person name="Dimitrov A.S."/>
            <person name="Bossart K.N."/>
            <person name="Crameri G."/>
            <person name="Mungall B.A."/>
            <person name="Bishop K.A."/>
            <person name="Choudhry V."/>
            <person name="Dimitrov D.S."/>
            <person name="Wang L.F."/>
            <person name="Eaton B.T."/>
            <person name="Broder C.C."/>
        </authorList>
    </citation>
    <scope>FUNCTION (MICROBIAL INFECTION)</scope>
    <scope>INTERACTION WITH HENDRA VIRUS GLYCOPROTEIN</scope>
</reference>
<reference key="9">
    <citation type="journal article" date="2006" name="PLoS Pathog.">
        <title>Two key residues in ephrinB3 are critical for its use as an alternative receptor for Nipah virus.</title>
        <authorList>
            <person name="Negrete O.A."/>
            <person name="Wolf M.C."/>
            <person name="Aguilar H.C."/>
            <person name="Enterlein S."/>
            <person name="Wang W."/>
            <person name="Muehlberger E."/>
            <person name="Su S.V."/>
            <person name="Bertolotti-Ciarlet A."/>
            <person name="Flick R."/>
            <person name="Lee B."/>
        </authorList>
    </citation>
    <scope>FUNCTION (MICROBIAL INFECTION)</scope>
    <scope>INTERACTION WITH NIPAH VIRUS GLYCOPROTEIN</scope>
    <scope>MUTAGENESIS OF 121-LEU-TRP-122</scope>
</reference>
<reference key="10">
    <citation type="journal article" date="2007" name="J. Virol.">
        <title>Identification of Hendra virus G glycoprotein residues that are critical for receptor binding.</title>
        <authorList>
            <person name="Bishop K.A."/>
            <person name="Stantchev T.S."/>
            <person name="Hickey A.C."/>
            <person name="Khetawat D."/>
            <person name="Bossart K.N."/>
            <person name="Krasnoperov V."/>
            <person name="Gill P."/>
            <person name="Feng Y.R."/>
            <person name="Wang L."/>
            <person name="Eaton B.T."/>
            <person name="Wang L.F."/>
            <person name="Broder C.C."/>
        </authorList>
    </citation>
    <scope>FUNCTION (MICROBIAL INFECTION)</scope>
    <scope>INTERACTION WITH HENDRA VIRUS GLYCOPROTEIN</scope>
</reference>
<reference key="11">
    <citation type="journal article" date="2011" name="BMC Syst. Biol.">
        <title>Initial characterization of the human central proteome.</title>
        <authorList>
            <person name="Burkard T.R."/>
            <person name="Planyavsky M."/>
            <person name="Kaupe I."/>
            <person name="Breitwieser F.P."/>
            <person name="Buerckstuemmer T."/>
            <person name="Bennett K.L."/>
            <person name="Superti-Furga G."/>
            <person name="Colinge J."/>
        </authorList>
    </citation>
    <scope>IDENTIFICATION BY MASS SPECTROMETRY [LARGE SCALE ANALYSIS]</scope>
</reference>
<reference key="12">
    <citation type="journal article" date="2017" name="Mol. Biol. Cell">
        <title>Ubiquitin ligase SPSB4 diminishes cell repulsive responses mediated by EphB2.</title>
        <authorList>
            <person name="Okumura F."/>
            <person name="Joo-Okumura A."/>
            <person name="Obara K."/>
            <person name="Petersen A."/>
            <person name="Nishikimi A."/>
            <person name="Fukui Y."/>
            <person name="Nakatsukasa K."/>
            <person name="Kamura T."/>
        </authorList>
    </citation>
    <scope>SUBCELLULAR LOCATION</scope>
</reference>
<reference key="13">
    <citation type="journal article" date="2006" name="J. Biol. Chem.">
        <title>Structural and biophysical characterization of the EphB4*ephrinB2 protein-protein interaction and receptor specificity.</title>
        <authorList>
            <person name="Chrencik J.E."/>
            <person name="Brooun A."/>
            <person name="Kraus M.L."/>
            <person name="Recht M.I."/>
            <person name="Kolatkar A.R."/>
            <person name="Han G.W."/>
            <person name="Seifert J.M."/>
            <person name="Widmer H."/>
            <person name="Auer M."/>
            <person name="Kuhn P."/>
        </authorList>
    </citation>
    <scope>X-RAY CRYSTALLOGRAPHY (2.05 ANGSTROMS) OF 28-165 IN COMPLEX WITH EPHB4</scope>
    <scope>DISULFIDE BONDS</scope>
</reference>
<reference evidence="17" key="14">
    <citation type="submission" date="2006-09" db="PDB data bank">
        <title>NMR solution structure of human ephrinB2 ectodomain.</title>
        <authorList>
            <person name="Ran X."/>
            <person name="Fan J."/>
            <person name="Song J."/>
        </authorList>
    </citation>
    <scope>STRUCTURE BY NMR OF 25-166</scope>
    <scope>DISULFIDE BONDS</scope>
</reference>
<reference key="15">
    <citation type="journal article" date="2008" name="Nat. Struct. Mol. Biol.">
        <title>Structural basis of Nipah and Hendra virus attachment to their cell-surface receptor ephrin-B2.</title>
        <authorList>
            <person name="Bowden T.A."/>
            <person name="Aricescu A.R."/>
            <person name="Gilbert R.J."/>
            <person name="Grimes J.M."/>
            <person name="Jones E.Y."/>
            <person name="Stuart D.I."/>
        </authorList>
    </citation>
    <scope>X-RAY CRYSTALLOGRAPHY (1.8 ANGSTROMS) OF 28-165 IN COMPLEXES WITH NIPAH VIRUS AND HENDRA VIRUS GLYCOPROTEINS</scope>
    <scope>DISULFIDE BONDS</scope>
    <scope>GLYCOSYLATION AT ASN-36</scope>
</reference>
<reference key="16">
    <citation type="journal article" date="2009" name="Structure">
        <title>Structural plasticity of EPH receptor A4 facilitates cross-class ephrin signaling.</title>
        <authorList>
            <person name="Bowden T.A."/>
            <person name="Aricescu A.R."/>
            <person name="Nettleship J.E."/>
            <person name="Siebold C."/>
            <person name="Rahman-Huq N."/>
            <person name="Owens R.J."/>
            <person name="Stuart D.I."/>
            <person name="Jones E.Y."/>
        </authorList>
    </citation>
    <scope>X-RAY CRYSTALLOGRAPHY (2.45 ANGSTROMS) OF 27-167 IN COMPLEX WITH EPHA4</scope>
    <scope>DISULFIDE BONDS</scope>
    <scope>GLYCOSYLATION AT ASN-36</scope>
</reference>
<reference key="17">
    <citation type="journal article" date="2010" name="J. Biol. Chem.">
        <title>Structural characterization of the EphA4-Ephrin-B2 complex reveals new features enabling Eph-ephrin binding promiscuity.</title>
        <authorList>
            <person name="Qin H."/>
            <person name="Noberini R."/>
            <person name="Huan X."/>
            <person name="Shi J."/>
            <person name="Pasquale E.B."/>
            <person name="Song J."/>
        </authorList>
    </citation>
    <scope>X-RAY CRYSTALLOGRAPHY (2.5 ANGSTROMS) OF 27-169 IN COMPLEX WITH EPHA4</scope>
    <scope>DISULFIDE BONDS</scope>
</reference>
<keyword id="KW-0002">3D-structure</keyword>
<keyword id="KW-0037">Angiogenesis</keyword>
<keyword id="KW-0965">Cell junction</keyword>
<keyword id="KW-1003">Cell membrane</keyword>
<keyword id="KW-0217">Developmental protein</keyword>
<keyword id="KW-0221">Differentiation</keyword>
<keyword id="KW-1015">Disulfide bond</keyword>
<keyword id="KW-0325">Glycoprotein</keyword>
<keyword id="KW-1183">Host cell receptor for virus entry</keyword>
<keyword id="KW-0945">Host-virus interaction</keyword>
<keyword id="KW-0472">Membrane</keyword>
<keyword id="KW-0488">Methylation</keyword>
<keyword id="KW-0524">Neurogenesis</keyword>
<keyword id="KW-0597">Phosphoprotein</keyword>
<keyword id="KW-1267">Proteomics identification</keyword>
<keyword id="KW-0675">Receptor</keyword>
<keyword id="KW-1185">Reference proteome</keyword>
<keyword id="KW-0732">Signal</keyword>
<keyword id="KW-0812">Transmembrane</keyword>
<keyword id="KW-1133">Transmembrane helix</keyword>
<sequence>MAVRRDSVWKYCWGVLMVLCRTAISKSIVLEPIYWNSSNSKFLPGQGLVLYPQIGDKLDIICPKVDSKTVGQYEYYKVYMVDKDQADRCTIKKENTPLLNCAKPDQDIKFTIKFQEFSPNLWGLEFQKNKDYYIISTSNGSLEGLDNQEGGVCQTRAMKILMKVGQDASSAGSTRNKDPTRRPELEAGTNGRSSTTSPFVKPNPGSSTDGNSAGHSGNNILGSEVALFAGIASGCIIFIVIIITLVVLLLKYRRRHRKHSPQHTTTLSLSTLATPKRSGNNNGSEPSDIIIPLRTADSVFCPHYEKVSGDYGHPVYIVQEMPPQSPANIYYKV</sequence>
<dbReference type="EMBL" id="U16797">
    <property type="protein sequence ID" value="AAA99707.1"/>
    <property type="molecule type" value="mRNA"/>
</dbReference>
<dbReference type="EMBL" id="L38734">
    <property type="protein sequence ID" value="AAC41752.1"/>
    <property type="molecule type" value="mRNA"/>
</dbReference>
<dbReference type="EMBL" id="U81262">
    <property type="protein sequence ID" value="AAD03786.1"/>
    <property type="molecule type" value="mRNA"/>
</dbReference>
<dbReference type="EMBL" id="AL138689">
    <property type="status" value="NOT_ANNOTATED_CDS"/>
    <property type="molecule type" value="Genomic_DNA"/>
</dbReference>
<dbReference type="EMBL" id="BC069342">
    <property type="protein sequence ID" value="AAH69342.1"/>
    <property type="molecule type" value="mRNA"/>
</dbReference>
<dbReference type="EMBL" id="BC074856">
    <property type="protein sequence ID" value="AAH74856.1"/>
    <property type="molecule type" value="mRNA"/>
</dbReference>
<dbReference type="EMBL" id="BC074857">
    <property type="protein sequence ID" value="AAH74857.1"/>
    <property type="molecule type" value="mRNA"/>
</dbReference>
<dbReference type="EMBL" id="BC105955">
    <property type="protein sequence ID" value="AAI05956.1"/>
    <property type="molecule type" value="mRNA"/>
</dbReference>
<dbReference type="EMBL" id="BC105956">
    <property type="protein sequence ID" value="AAI05957.1"/>
    <property type="molecule type" value="mRNA"/>
</dbReference>
<dbReference type="EMBL" id="BC105957">
    <property type="protein sequence ID" value="AAI05958.1"/>
    <property type="molecule type" value="mRNA"/>
</dbReference>
<dbReference type="CCDS" id="CCDS9507.1"/>
<dbReference type="PIR" id="I84743">
    <property type="entry name" value="I84743"/>
</dbReference>
<dbReference type="RefSeq" id="NP_004084.1">
    <property type="nucleotide sequence ID" value="NM_004093.4"/>
</dbReference>
<dbReference type="PDB" id="2HLE">
    <property type="method" value="X-ray"/>
    <property type="resolution" value="2.05 A"/>
    <property type="chains" value="B=28-165"/>
</dbReference>
<dbReference type="PDB" id="2I85">
    <property type="method" value="NMR"/>
    <property type="chains" value="A=25-166"/>
</dbReference>
<dbReference type="PDB" id="2VSK">
    <property type="method" value="X-ray"/>
    <property type="resolution" value="3.30 A"/>
    <property type="chains" value="B/D=28-165"/>
</dbReference>
<dbReference type="PDB" id="2VSM">
    <property type="method" value="X-ray"/>
    <property type="resolution" value="1.80 A"/>
    <property type="chains" value="B=28-165"/>
</dbReference>
<dbReference type="PDB" id="2WO2">
    <property type="method" value="X-ray"/>
    <property type="resolution" value="2.45 A"/>
    <property type="chains" value="B=27-167"/>
</dbReference>
<dbReference type="PDB" id="3GXU">
    <property type="method" value="X-ray"/>
    <property type="resolution" value="2.50 A"/>
    <property type="chains" value="B=27-169"/>
</dbReference>
<dbReference type="PDB" id="4UF7">
    <property type="method" value="X-ray"/>
    <property type="resolution" value="1.70 A"/>
    <property type="chains" value="C/E=27-167"/>
</dbReference>
<dbReference type="PDB" id="6P7Y">
    <property type="method" value="X-ray"/>
    <property type="resolution" value="2.84 A"/>
    <property type="chains" value="B/D=27-170"/>
</dbReference>
<dbReference type="PDB" id="6PDL">
    <property type="method" value="X-ray"/>
    <property type="resolution" value="2.70 A"/>
    <property type="chains" value="B/D/F/H=27-167"/>
</dbReference>
<dbReference type="PDBsum" id="2HLE"/>
<dbReference type="PDBsum" id="2I85"/>
<dbReference type="PDBsum" id="2VSK"/>
<dbReference type="PDBsum" id="2VSM"/>
<dbReference type="PDBsum" id="2WO2"/>
<dbReference type="PDBsum" id="3GXU"/>
<dbReference type="PDBsum" id="4UF7"/>
<dbReference type="PDBsum" id="6P7Y"/>
<dbReference type="PDBsum" id="6PDL"/>
<dbReference type="BMRB" id="P52799"/>
<dbReference type="SMR" id="P52799"/>
<dbReference type="BioGRID" id="108268">
    <property type="interactions" value="135"/>
</dbReference>
<dbReference type="CORUM" id="P52799"/>
<dbReference type="DIP" id="DIP-46378N"/>
<dbReference type="FunCoup" id="P52799">
    <property type="interactions" value="382"/>
</dbReference>
<dbReference type="IntAct" id="P52799">
    <property type="interactions" value="66"/>
</dbReference>
<dbReference type="MINT" id="P52799"/>
<dbReference type="STRING" id="9606.ENSP00000493716"/>
<dbReference type="ChEMBL" id="CHEMBL4804245"/>
<dbReference type="GlyConnect" id="1937">
    <property type="glycosylation" value="8 N-Linked glycans (2 sites)"/>
</dbReference>
<dbReference type="GlyCosmos" id="P52799">
    <property type="glycosylation" value="3 sites, 8 glycans"/>
</dbReference>
<dbReference type="GlyGen" id="P52799">
    <property type="glycosylation" value="8 sites, 15 N-linked glycans (3 sites), 2 O-linked glycans (4 sites)"/>
</dbReference>
<dbReference type="iPTMnet" id="P52799"/>
<dbReference type="PhosphoSitePlus" id="P52799"/>
<dbReference type="BioMuta" id="EFNB2"/>
<dbReference type="DMDM" id="1706673"/>
<dbReference type="jPOST" id="P52799"/>
<dbReference type="MassIVE" id="P52799"/>
<dbReference type="PaxDb" id="9606-ENSP00000245323"/>
<dbReference type="PeptideAtlas" id="P52799"/>
<dbReference type="ProteomicsDB" id="56538"/>
<dbReference type="Pumba" id="P52799"/>
<dbReference type="Antibodypedia" id="2406">
    <property type="antibodies" value="530 antibodies from 44 providers"/>
</dbReference>
<dbReference type="DNASU" id="1948"/>
<dbReference type="Ensembl" id="ENST00000646441.1">
    <property type="protein sequence ID" value="ENSP00000493716.1"/>
    <property type="gene ID" value="ENSG00000125266.8"/>
</dbReference>
<dbReference type="GeneID" id="1948"/>
<dbReference type="KEGG" id="hsa:1948"/>
<dbReference type="MANE-Select" id="ENST00000646441.1">
    <property type="protein sequence ID" value="ENSP00000493716.1"/>
    <property type="RefSeq nucleotide sequence ID" value="NM_004093.4"/>
    <property type="RefSeq protein sequence ID" value="NP_004084.1"/>
</dbReference>
<dbReference type="UCSC" id="uc001vqi.4">
    <property type="organism name" value="human"/>
</dbReference>
<dbReference type="AGR" id="HGNC:3227"/>
<dbReference type="CTD" id="1948"/>
<dbReference type="DisGeNET" id="1948"/>
<dbReference type="GeneCards" id="EFNB2"/>
<dbReference type="HGNC" id="HGNC:3227">
    <property type="gene designation" value="EFNB2"/>
</dbReference>
<dbReference type="HPA" id="ENSG00000125266">
    <property type="expression patterns" value="Low tissue specificity"/>
</dbReference>
<dbReference type="MalaCards" id="EFNB2"/>
<dbReference type="MIM" id="600527">
    <property type="type" value="gene"/>
</dbReference>
<dbReference type="neXtProt" id="NX_P52799"/>
<dbReference type="OpenTargets" id="ENSG00000125266"/>
<dbReference type="PharmGKB" id="PA27662"/>
<dbReference type="VEuPathDB" id="HostDB:ENSG00000125266"/>
<dbReference type="eggNOG" id="KOG3858">
    <property type="taxonomic scope" value="Eukaryota"/>
</dbReference>
<dbReference type="GeneTree" id="ENSGT00940000155868"/>
<dbReference type="HOGENOM" id="CLU_072080_0_0_1"/>
<dbReference type="InParanoid" id="P52799"/>
<dbReference type="OMA" id="VPYPPKH"/>
<dbReference type="OrthoDB" id="6250301at2759"/>
<dbReference type="PAN-GO" id="P52799">
    <property type="GO annotations" value="5 GO annotations based on evolutionary models"/>
</dbReference>
<dbReference type="PhylomeDB" id="P52799"/>
<dbReference type="PathwayCommons" id="P52799"/>
<dbReference type="Reactome" id="R-HSA-2682334">
    <property type="pathway name" value="EPH-Ephrin signaling"/>
</dbReference>
<dbReference type="Reactome" id="R-HSA-3928662">
    <property type="pathway name" value="EPHB-mediated forward signaling"/>
</dbReference>
<dbReference type="Reactome" id="R-HSA-3928664">
    <property type="pathway name" value="Ephrin signaling"/>
</dbReference>
<dbReference type="Reactome" id="R-HSA-3928665">
    <property type="pathway name" value="EPH-ephrin mediated repulsion of cells"/>
</dbReference>
<dbReference type="SignaLink" id="P52799"/>
<dbReference type="SIGNOR" id="P52799"/>
<dbReference type="BioGRID-ORCS" id="1948">
    <property type="hits" value="16 hits in 1155 CRISPR screens"/>
</dbReference>
<dbReference type="ChiTaRS" id="EFNB2">
    <property type="organism name" value="human"/>
</dbReference>
<dbReference type="EvolutionaryTrace" id="P52799"/>
<dbReference type="GeneWiki" id="EFNB2"/>
<dbReference type="GenomeRNAi" id="1948"/>
<dbReference type="Pharos" id="P52799">
    <property type="development level" value="Tbio"/>
</dbReference>
<dbReference type="PRO" id="PR:P52799"/>
<dbReference type="Proteomes" id="UP000005640">
    <property type="component" value="Chromosome 13"/>
</dbReference>
<dbReference type="RNAct" id="P52799">
    <property type="molecule type" value="protein"/>
</dbReference>
<dbReference type="Bgee" id="ENSG00000125266">
    <property type="expression patterns" value="Expressed in ventricular zone and 207 other cell types or tissues"/>
</dbReference>
<dbReference type="GO" id="GO:0005912">
    <property type="term" value="C:adherens junction"/>
    <property type="evidence" value="ECO:0007669"/>
    <property type="project" value="UniProtKB-SubCell"/>
</dbReference>
<dbReference type="GO" id="GO:0030425">
    <property type="term" value="C:dendrite"/>
    <property type="evidence" value="ECO:0007669"/>
    <property type="project" value="Ensembl"/>
</dbReference>
<dbReference type="GO" id="GO:0005925">
    <property type="term" value="C:focal adhesion"/>
    <property type="evidence" value="ECO:0007005"/>
    <property type="project" value="UniProtKB"/>
</dbReference>
<dbReference type="GO" id="GO:0098978">
    <property type="term" value="C:glutamatergic synapse"/>
    <property type="evidence" value="ECO:0000318"/>
    <property type="project" value="GO_Central"/>
</dbReference>
<dbReference type="GO" id="GO:0005886">
    <property type="term" value="C:plasma membrane"/>
    <property type="evidence" value="ECO:0000314"/>
    <property type="project" value="UniProtKB"/>
</dbReference>
<dbReference type="GO" id="GO:0098839">
    <property type="term" value="C:postsynaptic density membrane"/>
    <property type="evidence" value="ECO:0007669"/>
    <property type="project" value="Ensembl"/>
</dbReference>
<dbReference type="GO" id="GO:0042734">
    <property type="term" value="C:presynaptic membrane"/>
    <property type="evidence" value="ECO:0000318"/>
    <property type="project" value="GO_Central"/>
</dbReference>
<dbReference type="GO" id="GO:0098685">
    <property type="term" value="C:Schaffer collateral - CA1 synapse"/>
    <property type="evidence" value="ECO:0007669"/>
    <property type="project" value="Ensembl"/>
</dbReference>
<dbReference type="GO" id="GO:0046875">
    <property type="term" value="F:ephrin receptor binding"/>
    <property type="evidence" value="ECO:0000353"/>
    <property type="project" value="UniProtKB"/>
</dbReference>
<dbReference type="GO" id="GO:0001618">
    <property type="term" value="F:virus receptor activity"/>
    <property type="evidence" value="ECO:0007669"/>
    <property type="project" value="UniProtKB-KW"/>
</dbReference>
<dbReference type="GO" id="GO:0034332">
    <property type="term" value="P:adherens junction organization"/>
    <property type="evidence" value="ECO:0007669"/>
    <property type="project" value="Ensembl"/>
</dbReference>
<dbReference type="GO" id="GO:0009653">
    <property type="term" value="P:anatomical structure morphogenesis"/>
    <property type="evidence" value="ECO:0000304"/>
    <property type="project" value="ProtInc"/>
</dbReference>
<dbReference type="GO" id="GO:0009887">
    <property type="term" value="P:animal organ morphogenesis"/>
    <property type="evidence" value="ECO:0007669"/>
    <property type="project" value="Ensembl"/>
</dbReference>
<dbReference type="GO" id="GO:0007411">
    <property type="term" value="P:axon guidance"/>
    <property type="evidence" value="ECO:0000318"/>
    <property type="project" value="GO_Central"/>
</dbReference>
<dbReference type="GO" id="GO:0048514">
    <property type="term" value="P:blood vessel morphogenesis"/>
    <property type="evidence" value="ECO:0000318"/>
    <property type="project" value="GO_Central"/>
</dbReference>
<dbReference type="GO" id="GO:0007155">
    <property type="term" value="P:cell adhesion"/>
    <property type="evidence" value="ECO:0000314"/>
    <property type="project" value="UniProtKB"/>
</dbReference>
<dbReference type="GO" id="GO:0002042">
    <property type="term" value="P:cell migration involved in sprouting angiogenesis"/>
    <property type="evidence" value="ECO:0000314"/>
    <property type="project" value="UniProtKB"/>
</dbReference>
<dbReference type="GO" id="GO:0007267">
    <property type="term" value="P:cell-cell signaling"/>
    <property type="evidence" value="ECO:0000304"/>
    <property type="project" value="ProtInc"/>
</dbReference>
<dbReference type="GO" id="GO:0071222">
    <property type="term" value="P:cellular response to lipopolysaccharide"/>
    <property type="evidence" value="ECO:0007669"/>
    <property type="project" value="Ensembl"/>
</dbReference>
<dbReference type="GO" id="GO:0048013">
    <property type="term" value="P:ephrin receptor signaling pathway"/>
    <property type="evidence" value="ECO:0000314"/>
    <property type="project" value="UniProtKB"/>
</dbReference>
<dbReference type="GO" id="GO:0043616">
    <property type="term" value="P:keratinocyte proliferation"/>
    <property type="evidence" value="ECO:0007669"/>
    <property type="project" value="Ensembl"/>
</dbReference>
<dbReference type="GO" id="GO:0001945">
    <property type="term" value="P:lymph vessel development"/>
    <property type="evidence" value="ECO:0007669"/>
    <property type="project" value="Ensembl"/>
</dbReference>
<dbReference type="GO" id="GO:0010839">
    <property type="term" value="P:negative regulation of keratinocyte proliferation"/>
    <property type="evidence" value="ECO:0007669"/>
    <property type="project" value="Ensembl"/>
</dbReference>
<dbReference type="GO" id="GO:0010977">
    <property type="term" value="P:negative regulation of neuron projection development"/>
    <property type="evidence" value="ECO:0000314"/>
    <property type="project" value="ARUK-UCL"/>
</dbReference>
<dbReference type="GO" id="GO:0072178">
    <property type="term" value="P:nephric duct morphogenesis"/>
    <property type="evidence" value="ECO:0007669"/>
    <property type="project" value="Ensembl"/>
</dbReference>
<dbReference type="GO" id="GO:1903849">
    <property type="term" value="P:positive regulation of aorta morphogenesis"/>
    <property type="evidence" value="ECO:0007669"/>
    <property type="project" value="Ensembl"/>
</dbReference>
<dbReference type="GO" id="GO:2000727">
    <property type="term" value="P:positive regulation of cardiac muscle cell differentiation"/>
    <property type="evidence" value="ECO:0000250"/>
    <property type="project" value="BHF-UCL"/>
</dbReference>
<dbReference type="GO" id="GO:0008284">
    <property type="term" value="P:positive regulation of cell population proliferation"/>
    <property type="evidence" value="ECO:0000315"/>
    <property type="project" value="BHF-UCL"/>
</dbReference>
<dbReference type="GO" id="GO:0099054">
    <property type="term" value="P:presynapse assembly"/>
    <property type="evidence" value="ECO:0007669"/>
    <property type="project" value="Ensembl"/>
</dbReference>
<dbReference type="GO" id="GO:0050920">
    <property type="term" value="P:regulation of chemotaxis"/>
    <property type="evidence" value="ECO:0000314"/>
    <property type="project" value="UniProtKB"/>
</dbReference>
<dbReference type="GO" id="GO:0099072">
    <property type="term" value="P:regulation of postsynaptic membrane neurotransmitter receptor levels"/>
    <property type="evidence" value="ECO:0007669"/>
    <property type="project" value="Ensembl"/>
</dbReference>
<dbReference type="GO" id="GO:0099149">
    <property type="term" value="P:regulation of postsynaptic neurotransmitter receptor internalization"/>
    <property type="evidence" value="ECO:0007669"/>
    <property type="project" value="Ensembl"/>
</dbReference>
<dbReference type="GO" id="GO:0031295">
    <property type="term" value="P:T cell costimulation"/>
    <property type="evidence" value="ECO:0007669"/>
    <property type="project" value="Ensembl"/>
</dbReference>
<dbReference type="GO" id="GO:0048845">
    <property type="term" value="P:venous blood vessel morphogenesis"/>
    <property type="evidence" value="ECO:0007669"/>
    <property type="project" value="Ensembl"/>
</dbReference>
<dbReference type="CDD" id="cd10426">
    <property type="entry name" value="Ephrin-B_Ectodomain"/>
    <property type="match status" value="1"/>
</dbReference>
<dbReference type="DisProt" id="DP01588"/>
<dbReference type="FunFam" id="2.60.40.420:FF:000020">
    <property type="entry name" value="Ephrin-B2"/>
    <property type="match status" value="1"/>
</dbReference>
<dbReference type="Gene3D" id="2.60.40.420">
    <property type="entry name" value="Cupredoxins - blue copper proteins"/>
    <property type="match status" value="1"/>
</dbReference>
<dbReference type="InterPro" id="IPR008972">
    <property type="entry name" value="Cupredoxin"/>
</dbReference>
<dbReference type="InterPro" id="IPR031328">
    <property type="entry name" value="Ephrin"/>
</dbReference>
<dbReference type="InterPro" id="IPR034255">
    <property type="entry name" value="Ephrin-B_Ecto"/>
</dbReference>
<dbReference type="InterPro" id="IPR019765">
    <property type="entry name" value="Ephrin_CS"/>
</dbReference>
<dbReference type="InterPro" id="IPR001799">
    <property type="entry name" value="Ephrin_RBD"/>
</dbReference>
<dbReference type="PANTHER" id="PTHR11304">
    <property type="entry name" value="EPHRIN"/>
    <property type="match status" value="1"/>
</dbReference>
<dbReference type="PANTHER" id="PTHR11304:SF18">
    <property type="entry name" value="EPHRIN-B2"/>
    <property type="match status" value="1"/>
</dbReference>
<dbReference type="Pfam" id="PF00812">
    <property type="entry name" value="Ephrin"/>
    <property type="match status" value="1"/>
</dbReference>
<dbReference type="PRINTS" id="PR01347">
    <property type="entry name" value="EPHRIN"/>
</dbReference>
<dbReference type="SUPFAM" id="SSF49503">
    <property type="entry name" value="Cupredoxins"/>
    <property type="match status" value="1"/>
</dbReference>
<dbReference type="PROSITE" id="PS01299">
    <property type="entry name" value="EPHRIN_RBD_1"/>
    <property type="match status" value="1"/>
</dbReference>
<dbReference type="PROSITE" id="PS51551">
    <property type="entry name" value="EPHRIN_RBD_2"/>
    <property type="match status" value="1"/>
</dbReference>
<proteinExistence type="evidence at protein level"/>
<gene>
    <name type="primary">EFNB2</name>
    <name type="synonym">EPLG5</name>
    <name type="synonym">HTKL</name>
    <name type="synonym">LERK5</name>
</gene>
<organism>
    <name type="scientific">Homo sapiens</name>
    <name type="common">Human</name>
    <dbReference type="NCBI Taxonomy" id="9606"/>
    <lineage>
        <taxon>Eukaryota</taxon>
        <taxon>Metazoa</taxon>
        <taxon>Chordata</taxon>
        <taxon>Craniata</taxon>
        <taxon>Vertebrata</taxon>
        <taxon>Euteleostomi</taxon>
        <taxon>Mammalia</taxon>
        <taxon>Eutheria</taxon>
        <taxon>Euarchontoglires</taxon>
        <taxon>Primates</taxon>
        <taxon>Haplorrhini</taxon>
        <taxon>Catarrhini</taxon>
        <taxon>Hominidae</taxon>
        <taxon>Homo</taxon>
    </lineage>
</organism>